<accession>Q4L5M1</accession>
<proteinExistence type="inferred from homology"/>
<sequence length="44" mass="4561">MSKLVQAISDAVQAGQNQDWAKLGTSIVGIVENGVGILGKLFGF</sequence>
<organism>
    <name type="scientific">Staphylococcus haemolyticus (strain JCSC1435)</name>
    <dbReference type="NCBI Taxonomy" id="279808"/>
    <lineage>
        <taxon>Bacteria</taxon>
        <taxon>Bacillati</taxon>
        <taxon>Bacillota</taxon>
        <taxon>Bacilli</taxon>
        <taxon>Bacillales</taxon>
        <taxon>Staphylococcaceae</taxon>
        <taxon>Staphylococcus</taxon>
    </lineage>
</organism>
<keyword id="KW-0044">Antibiotic</keyword>
<keyword id="KW-0929">Antimicrobial</keyword>
<keyword id="KW-0204">Cytolysis</keyword>
<keyword id="KW-0354">Hemolysis</keyword>
<keyword id="KW-0964">Secreted</keyword>
<keyword id="KW-0800">Toxin</keyword>
<keyword id="KW-0843">Virulence</keyword>
<gene>
    <name type="ordered locus">SH1743</name>
</gene>
<gene>
    <name type="ordered locus">SH1745</name>
</gene>
<evidence type="ECO:0000250" key="1"/>
<evidence type="ECO:0000305" key="2"/>
<reference key="1">
    <citation type="journal article" date="2005" name="J. Bacteriol.">
        <title>Whole-genome sequencing of Staphylococcus haemolyticus uncovers the extreme plasticity of its genome and the evolution of human-colonizing staphylococcal species.</title>
        <authorList>
            <person name="Takeuchi F."/>
            <person name="Watanabe S."/>
            <person name="Baba T."/>
            <person name="Yuzawa H."/>
            <person name="Ito T."/>
            <person name="Morimoto Y."/>
            <person name="Kuroda M."/>
            <person name="Cui L."/>
            <person name="Takahashi M."/>
            <person name="Ankai A."/>
            <person name="Baba S."/>
            <person name="Fukui S."/>
            <person name="Lee J.C."/>
            <person name="Hiramatsu K."/>
        </authorList>
    </citation>
    <scope>NUCLEOTIDE SEQUENCE [LARGE SCALE GENOMIC DNA]</scope>
    <source>
        <strain>JCSC1435</strain>
    </source>
</reference>
<name>GGI3_STAHJ</name>
<feature type="chain" id="PRO_0000302137" description="Antibacterial protein 3 homolog">
    <location>
        <begin position="1"/>
        <end position="44"/>
    </location>
</feature>
<dbReference type="EMBL" id="AP006716">
    <property type="protein sequence ID" value="BAE05052.1"/>
    <property type="molecule type" value="Genomic_DNA"/>
</dbReference>
<dbReference type="EMBL" id="AP006716">
    <property type="protein sequence ID" value="BAE05054.1"/>
    <property type="molecule type" value="Genomic_DNA"/>
</dbReference>
<dbReference type="RefSeq" id="WP_011276028.1">
    <property type="nucleotide sequence ID" value="NC_007168.1"/>
</dbReference>
<dbReference type="SMR" id="Q4L5M1"/>
<dbReference type="KEGG" id="sha:SH1743"/>
<dbReference type="KEGG" id="sha:SH1745"/>
<dbReference type="eggNOG" id="ENOG503044Z">
    <property type="taxonomic scope" value="Bacteria"/>
</dbReference>
<dbReference type="HOGENOM" id="CLU_207329_1_0_9"/>
<dbReference type="OrthoDB" id="2401404at2"/>
<dbReference type="Proteomes" id="UP000000543">
    <property type="component" value="Chromosome"/>
</dbReference>
<dbReference type="GO" id="GO:0005576">
    <property type="term" value="C:extracellular region"/>
    <property type="evidence" value="ECO:0007669"/>
    <property type="project" value="UniProtKB-SubCell"/>
</dbReference>
<dbReference type="GO" id="GO:0090729">
    <property type="term" value="F:toxin activity"/>
    <property type="evidence" value="ECO:0007669"/>
    <property type="project" value="UniProtKB-KW"/>
</dbReference>
<dbReference type="GO" id="GO:0042742">
    <property type="term" value="P:defense response to bacterium"/>
    <property type="evidence" value="ECO:0007669"/>
    <property type="project" value="UniProtKB-KW"/>
</dbReference>
<dbReference type="GO" id="GO:0031640">
    <property type="term" value="P:killing of cells of another organism"/>
    <property type="evidence" value="ECO:0007669"/>
    <property type="project" value="UniProtKB-KW"/>
</dbReference>
<dbReference type="InterPro" id="IPR008846">
    <property type="entry name" value="PSMbeta"/>
</dbReference>
<dbReference type="Pfam" id="PF05480">
    <property type="entry name" value="PSMbeta"/>
    <property type="match status" value="1"/>
</dbReference>
<comment type="function">
    <text evidence="1">Has hemolytic activity and also inhibits the growth of gonococci.</text>
</comment>
<comment type="subcellular location">
    <subcellularLocation>
        <location evidence="1">Secreted</location>
    </subcellularLocation>
</comment>
<comment type="similarity">
    <text evidence="2">Belongs to the staphylococcal hemolytic protein family.</text>
</comment>
<protein>
    <recommendedName>
        <fullName>Antibacterial protein 3 homolog</fullName>
    </recommendedName>
</protein>